<comment type="function">
    <text evidence="3">Thought to play a role in photoprotection of the coral's resident symbiont microalgae's photosystems from photoinhibition caused by high light levels found near the surface of coral reefs.</text>
</comment>
<comment type="subunit">
    <text evidence="2">Homotetramer.</text>
</comment>
<comment type="PTM">
    <text>Contains a chromophore consisting of modified amino acid residues. The chromophore is formed by autocatalytic backbone condensation between Xaa-N and Gly-(N+2), oxidation of Tyr-(N+1) to didehydrotyrosine, and formation of a double bond to the alpha-amino nitrogen of residue Xaa-N. Maturation of the chromophore requires nothing other than molecular oxygen.</text>
</comment>
<comment type="biotechnology">
    <text evidence="4">Fluorescent proteins have become a useful and ubiquitous tool for making chimeric proteins, where they function as a fluorescent protein tag. Typically they tolerate N- and C-terminal fusion to a broad variety of proteins. They have been expressed in most known cell types and are used as a noninvasive fluorescent marker in living cells and organisms. They enable a wide range of applications where they have functioned as a cell lineage tracer, reporter of gene expression, or as a measure of protein-protein interactions.</text>
</comment>
<comment type="miscellaneous">
    <text evidence="1 2">The wild-type form is non-fluorescent with the color being pH dependent, ranging from yellow at low pH, through red to blue at high pH. The His-142 mutation produces a fluorescent form.</text>
</comment>
<comment type="similarity">
    <text evidence="4">Belongs to the GFP family.</text>
</comment>
<sequence length="221" mass="24911">MSVIATQMTYKVYMSGTVNGHYFEVEGDGKGRPYEGEQTVKLTVTKGGPLPFAWDILSPQCQYGSIPFTKYPEDIPDYVKQSFPEGFTWERIMNFEDGAVCTVSNDSSIQGNCFTYHVKFSGLNFPPNGPVMQKKTQGWEPHSERLFARGGMLIGNNFMALKLEGGGHYLCEFKTTYKAKKPVKMPGYHYVDRKLDVTNHNKDYTSVEQCEISIARKPVVA</sequence>
<dbReference type="PDB" id="1MOU">
    <property type="method" value="X-ray"/>
    <property type="resolution" value="2.20 A"/>
    <property type="chains" value="A=3-221"/>
</dbReference>
<dbReference type="PDB" id="1MOV">
    <property type="method" value="X-ray"/>
    <property type="resolution" value="2.40 A"/>
    <property type="chains" value="A=3-221"/>
</dbReference>
<dbReference type="PDB" id="2ARL">
    <property type="method" value="X-ray"/>
    <property type="resolution" value="2.00 A"/>
    <property type="chains" value="A=2-221"/>
</dbReference>
<dbReference type="PDB" id="2P4M">
    <property type="method" value="X-ray"/>
    <property type="resolution" value="1.80 A"/>
    <property type="chains" value="A/B/C/D/E/F/G/H=1-221"/>
</dbReference>
<dbReference type="PDB" id="3VIC">
    <property type="method" value="X-ray"/>
    <property type="resolution" value="2.20 A"/>
    <property type="chains" value="A/B/C/D/E/F/G/H=1-221"/>
</dbReference>
<dbReference type="PDB" id="3VK1">
    <property type="method" value="X-ray"/>
    <property type="resolution" value="2.20 A"/>
    <property type="chains" value="A=1-221"/>
</dbReference>
<dbReference type="PDBsum" id="1MOU"/>
<dbReference type="PDBsum" id="1MOV"/>
<dbReference type="PDBsum" id="2ARL"/>
<dbReference type="PDBsum" id="2P4M"/>
<dbReference type="PDBsum" id="3VIC"/>
<dbReference type="PDBsum" id="3VK1"/>
<dbReference type="SMR" id="P83690"/>
<dbReference type="EvolutionaryTrace" id="P83690"/>
<dbReference type="GO" id="GO:0008218">
    <property type="term" value="P:bioluminescence"/>
    <property type="evidence" value="ECO:0007669"/>
    <property type="project" value="UniProtKB-KW"/>
</dbReference>
<dbReference type="Gene3D" id="2.40.155.10">
    <property type="entry name" value="Green fluorescent protein"/>
    <property type="match status" value="1"/>
</dbReference>
<dbReference type="InterPro" id="IPR009017">
    <property type="entry name" value="GFP"/>
</dbReference>
<dbReference type="InterPro" id="IPR011584">
    <property type="entry name" value="GFP-related"/>
</dbReference>
<dbReference type="Pfam" id="PF01353">
    <property type="entry name" value="GFP"/>
    <property type="match status" value="1"/>
</dbReference>
<dbReference type="SUPFAM" id="SSF54511">
    <property type="entry name" value="GFP-like"/>
    <property type="match status" value="1"/>
</dbReference>
<keyword id="KW-0002">3D-structure</keyword>
<keyword id="KW-0157">Chromophore</keyword>
<keyword id="KW-0455">Luminescence</keyword>
<keyword id="KW-0599">Photoprotein</keyword>
<evidence type="ECO:0000269" key="1">
    <source>
    </source>
</evidence>
<evidence type="ECO:0000269" key="2">
    <source>
    </source>
</evidence>
<evidence type="ECO:0000303" key="3">
    <source>
    </source>
</evidence>
<evidence type="ECO:0000305" key="4"/>
<evidence type="ECO:0000312" key="5">
    <source>
        <dbReference type="PDB" id="1MOU"/>
    </source>
</evidence>
<evidence type="ECO:0007829" key="6">
    <source>
        <dbReference type="PDB" id="2P4M"/>
    </source>
</evidence>
<name>NFCP_MONEF</name>
<protein>
    <recommendedName>
        <fullName>GFP-like non-fluorescent chromoprotein</fullName>
    </recommendedName>
    <alternativeName>
        <fullName>Non-fluorescent pocilloporin</fullName>
    </alternativeName>
    <alternativeName>
        <fullName>Rtms 5</fullName>
    </alternativeName>
</protein>
<proteinExistence type="evidence at protein level"/>
<accession>P83690</accession>
<reference evidence="4" key="1">
    <citation type="journal article" date="2003" name="Acta Crystallogr. D">
        <title>The production, purification and crystallization of a pocilloporin pigment from a reef-forming coral.</title>
        <authorList>
            <person name="Beddoe T."/>
            <person name="Ling M."/>
            <person name="Dove S."/>
            <person name="Hoegh-Guldberg O."/>
            <person name="Devenish R.J."/>
            <person name="Prescott M."/>
            <person name="Rossjohn J."/>
        </authorList>
    </citation>
    <scope>CRYSTALLIZATION</scope>
</reference>
<reference evidence="4 5" key="2">
    <citation type="journal article" date="2003" name="Structure">
        <title>The 2.2 A crystal structure of a pocilloporin pigment reveals a nonplanar chromophore conformation.</title>
        <authorList>
            <person name="Prescott M."/>
            <person name="Ling M."/>
            <person name="Beddoe T."/>
            <person name="Oakley A.J."/>
            <person name="Dove S."/>
            <person name="Hoegh-Guldberg O."/>
            <person name="Devenish R.J."/>
            <person name="Rossjohn J."/>
        </authorList>
    </citation>
    <scope>X-RAY CRYSTALLOGRAPHY (2.2 ANGSTROMS)</scope>
    <scope>SUBUNIT</scope>
    <scope>MUTAGENESIS OF HIS-142 AND PHE-158</scope>
    <scope>DEHYDROGENATION AT TYR-63</scope>
</reference>
<organism>
    <name type="scientific">Montipora efflorescens</name>
    <name type="common">Pore coral</name>
    <dbReference type="NCBI Taxonomy" id="105610"/>
    <lineage>
        <taxon>Eukaryota</taxon>
        <taxon>Metazoa</taxon>
        <taxon>Cnidaria</taxon>
        <taxon>Anthozoa</taxon>
        <taxon>Hexacorallia</taxon>
        <taxon>Scleractinia</taxon>
        <taxon>Astrocoeniina</taxon>
        <taxon>Acroporidae</taxon>
        <taxon>Montipora</taxon>
    </lineage>
</organism>
<feature type="chain" id="PRO_0000192586" description="GFP-like non-fluorescent chromoprotein">
    <location>
        <begin position="1"/>
        <end position="221"/>
    </location>
</feature>
<feature type="modified residue" description="(E)-2,3-didehydrotyrosine" evidence="2">
    <location>
        <position position="63"/>
    </location>
</feature>
<feature type="cross-link" description="2-iminomethyl-5-imidazolinone (Gln-Gly)" evidence="2">
    <location>
        <begin position="62"/>
        <end position="64"/>
    </location>
</feature>
<feature type="mutagenesis site" description="Produces a fluorescent form." evidence="2">
    <original>H</original>
    <variation>S</variation>
    <location>
        <position position="142"/>
    </location>
</feature>
<feature type="mutagenesis site" description="Produces a homodimeric form." evidence="2">
    <original>F</original>
    <variation>H</variation>
    <location>
        <position position="158"/>
    </location>
</feature>
<feature type="strand" evidence="6">
    <location>
        <begin position="6"/>
        <end position="18"/>
    </location>
</feature>
<feature type="strand" evidence="6">
    <location>
        <begin position="21"/>
        <end position="32"/>
    </location>
</feature>
<feature type="turn" evidence="6">
    <location>
        <begin position="33"/>
        <end position="36"/>
    </location>
</feature>
<feature type="strand" evidence="6">
    <location>
        <begin position="37"/>
        <end position="47"/>
    </location>
</feature>
<feature type="helix" evidence="6">
    <location>
        <begin position="54"/>
        <end position="56"/>
    </location>
</feature>
<feature type="helix" evidence="6">
    <location>
        <begin position="58"/>
        <end position="60"/>
    </location>
</feature>
<feature type="helix" evidence="6">
    <location>
        <begin position="78"/>
        <end position="81"/>
    </location>
</feature>
<feature type="turn" evidence="6">
    <location>
        <begin position="82"/>
        <end position="85"/>
    </location>
</feature>
<feature type="strand" evidence="6">
    <location>
        <begin position="87"/>
        <end position="95"/>
    </location>
</feature>
<feature type="strand" evidence="6">
    <location>
        <begin position="100"/>
        <end position="110"/>
    </location>
</feature>
<feature type="strand" evidence="6">
    <location>
        <begin position="113"/>
        <end position="123"/>
    </location>
</feature>
<feature type="turn" evidence="6">
    <location>
        <begin position="130"/>
        <end position="134"/>
    </location>
</feature>
<feature type="strand" evidence="6">
    <location>
        <begin position="136"/>
        <end position="139"/>
    </location>
</feature>
<feature type="strand" evidence="6">
    <location>
        <begin position="142"/>
        <end position="149"/>
    </location>
</feature>
<feature type="strand" evidence="6">
    <location>
        <begin position="152"/>
        <end position="163"/>
    </location>
</feature>
<feature type="strand" evidence="6">
    <location>
        <begin position="168"/>
        <end position="181"/>
    </location>
</feature>
<feature type="strand" evidence="6">
    <location>
        <begin position="188"/>
        <end position="200"/>
    </location>
</feature>
<feature type="strand" evidence="6">
    <location>
        <begin position="204"/>
        <end position="217"/>
    </location>
</feature>